<organism>
    <name type="scientific">Yersinia pseudotuberculosis serotype I (strain IP32953)</name>
    <dbReference type="NCBI Taxonomy" id="273123"/>
    <lineage>
        <taxon>Bacteria</taxon>
        <taxon>Pseudomonadati</taxon>
        <taxon>Pseudomonadota</taxon>
        <taxon>Gammaproteobacteria</taxon>
        <taxon>Enterobacterales</taxon>
        <taxon>Yersiniaceae</taxon>
        <taxon>Yersinia</taxon>
    </lineage>
</organism>
<proteinExistence type="inferred from homology"/>
<feature type="chain" id="PRO_0000105417" description="Cation/acetate symporter ActP">
    <location>
        <begin position="1"/>
        <end position="551"/>
    </location>
</feature>
<feature type="transmembrane region" description="Helical" evidence="1">
    <location>
        <begin position="34"/>
        <end position="56"/>
    </location>
</feature>
<feature type="transmembrane region" description="Helical" evidence="1">
    <location>
        <begin position="77"/>
        <end position="99"/>
    </location>
</feature>
<feature type="transmembrane region" description="Helical" evidence="1">
    <location>
        <begin position="104"/>
        <end position="126"/>
    </location>
</feature>
<feature type="transmembrane region" description="Helical" evidence="1">
    <location>
        <begin position="147"/>
        <end position="169"/>
    </location>
</feature>
<feature type="transmembrane region" description="Helical" evidence="1">
    <location>
        <begin position="179"/>
        <end position="201"/>
    </location>
</feature>
<feature type="transmembrane region" description="Helical" evidence="1">
    <location>
        <begin position="206"/>
        <end position="228"/>
    </location>
</feature>
<feature type="transmembrane region" description="Helical" evidence="1">
    <location>
        <begin position="265"/>
        <end position="287"/>
    </location>
</feature>
<feature type="transmembrane region" description="Helical" evidence="1">
    <location>
        <begin position="300"/>
        <end position="322"/>
    </location>
</feature>
<feature type="transmembrane region" description="Helical" evidence="1">
    <location>
        <begin position="363"/>
        <end position="385"/>
    </location>
</feature>
<feature type="transmembrane region" description="Helical" evidence="1">
    <location>
        <begin position="406"/>
        <end position="425"/>
    </location>
</feature>
<feature type="transmembrane region" description="Helical" evidence="1">
    <location>
        <begin position="430"/>
        <end position="452"/>
    </location>
</feature>
<feature type="transmembrane region" description="Helical" evidence="1">
    <location>
        <begin position="465"/>
        <end position="487"/>
    </location>
</feature>
<feature type="transmembrane region" description="Helical" evidence="1">
    <location>
        <begin position="502"/>
        <end position="519"/>
    </location>
</feature>
<dbReference type="EMBL" id="BX936398">
    <property type="protein sequence ID" value="CAH19546.1"/>
    <property type="molecule type" value="Genomic_DNA"/>
</dbReference>
<dbReference type="RefSeq" id="WP_011191562.1">
    <property type="nucleotide sequence ID" value="NC_006155.1"/>
</dbReference>
<dbReference type="SMR" id="Q66FN0"/>
<dbReference type="GeneID" id="49787700"/>
<dbReference type="KEGG" id="ypo:BZ17_2262"/>
<dbReference type="KEGG" id="yps:YPTB0306"/>
<dbReference type="PATRIC" id="fig|273123.14.peg.2396"/>
<dbReference type="Proteomes" id="UP000001011">
    <property type="component" value="Chromosome"/>
</dbReference>
<dbReference type="GO" id="GO:0005886">
    <property type="term" value="C:plasma membrane"/>
    <property type="evidence" value="ECO:0007669"/>
    <property type="project" value="UniProtKB-SubCell"/>
</dbReference>
<dbReference type="GO" id="GO:0015123">
    <property type="term" value="F:acetate transmembrane transporter activity"/>
    <property type="evidence" value="ECO:0007669"/>
    <property type="project" value="UniProtKB-UniRule"/>
</dbReference>
<dbReference type="GO" id="GO:0043879">
    <property type="term" value="F:glycolate transmembrane transporter activity"/>
    <property type="evidence" value="ECO:0007669"/>
    <property type="project" value="InterPro"/>
</dbReference>
<dbReference type="GO" id="GO:0015293">
    <property type="term" value="F:symporter activity"/>
    <property type="evidence" value="ECO:0007669"/>
    <property type="project" value="UniProtKB-KW"/>
</dbReference>
<dbReference type="GO" id="GO:0006847">
    <property type="term" value="P:plasma membrane acetate transport"/>
    <property type="evidence" value="ECO:0007669"/>
    <property type="project" value="TreeGrafter"/>
</dbReference>
<dbReference type="GO" id="GO:0006814">
    <property type="term" value="P:sodium ion transport"/>
    <property type="evidence" value="ECO:0007669"/>
    <property type="project" value="UniProtKB-KW"/>
</dbReference>
<dbReference type="CDD" id="cd11480">
    <property type="entry name" value="SLC5sbd_u4"/>
    <property type="match status" value="1"/>
</dbReference>
<dbReference type="FunFam" id="1.20.1730.10:FF:000001">
    <property type="entry name" value="Cation/acetate symporter ActP"/>
    <property type="match status" value="1"/>
</dbReference>
<dbReference type="Gene3D" id="1.20.1730.10">
    <property type="entry name" value="Sodium/glucose cotransporter"/>
    <property type="match status" value="1"/>
</dbReference>
<dbReference type="HAMAP" id="MF_01426">
    <property type="entry name" value="Acet_symport_ActP"/>
    <property type="match status" value="1"/>
</dbReference>
<dbReference type="InterPro" id="IPR014083">
    <property type="entry name" value="Cation/Ac_symporter_ActP"/>
</dbReference>
<dbReference type="InterPro" id="IPR038377">
    <property type="entry name" value="Na/Glc_symporter_sf"/>
</dbReference>
<dbReference type="InterPro" id="IPR001734">
    <property type="entry name" value="Na/solute_symporter"/>
</dbReference>
<dbReference type="InterPro" id="IPR018212">
    <property type="entry name" value="Na/solute_symporter_CS"/>
</dbReference>
<dbReference type="InterPro" id="IPR050277">
    <property type="entry name" value="Sodium:Solute_Symporter"/>
</dbReference>
<dbReference type="NCBIfam" id="NF006903">
    <property type="entry name" value="PRK09395.1"/>
    <property type="match status" value="1"/>
</dbReference>
<dbReference type="NCBIfam" id="NF009135">
    <property type="entry name" value="PRK12488.1"/>
    <property type="match status" value="1"/>
</dbReference>
<dbReference type="NCBIfam" id="TIGR00813">
    <property type="entry name" value="sss"/>
    <property type="match status" value="1"/>
</dbReference>
<dbReference type="NCBIfam" id="TIGR02711">
    <property type="entry name" value="symport_actP"/>
    <property type="match status" value="1"/>
</dbReference>
<dbReference type="PANTHER" id="PTHR48086:SF6">
    <property type="entry name" value="CATION_ACETATE SYMPORTER ACTP"/>
    <property type="match status" value="1"/>
</dbReference>
<dbReference type="PANTHER" id="PTHR48086">
    <property type="entry name" value="SODIUM/PROLINE SYMPORTER-RELATED"/>
    <property type="match status" value="1"/>
</dbReference>
<dbReference type="Pfam" id="PF00474">
    <property type="entry name" value="SSF"/>
    <property type="match status" value="1"/>
</dbReference>
<dbReference type="PROSITE" id="PS00456">
    <property type="entry name" value="NA_SOLUT_SYMP_1"/>
    <property type="match status" value="1"/>
</dbReference>
<dbReference type="PROSITE" id="PS50283">
    <property type="entry name" value="NA_SOLUT_SYMP_3"/>
    <property type="match status" value="1"/>
</dbReference>
<gene>
    <name evidence="1" type="primary">actP</name>
    <name type="ordered locus">YPTB0306</name>
</gene>
<accession>Q66FN0</accession>
<comment type="function">
    <text evidence="1">Transports acetate.</text>
</comment>
<comment type="subcellular location">
    <subcellularLocation>
        <location evidence="1">Cell inner membrane</location>
        <topology evidence="1">Multi-pass membrane protein</topology>
    </subcellularLocation>
</comment>
<comment type="similarity">
    <text evidence="1">Belongs to the sodium:solute symporter (SSF) (TC 2.A.21) family.</text>
</comment>
<sequence length="551" mass="59324">MKIRHWSALSLFVLPALAQAEALTGEVHRQPLNIQAIVMFLLFVGGTLYITYWASKRTRSRQDYYTAGGRITGFQNGLAIAGDYMSAASFLGISALVYASGYDGLIYSIGFLIGWPIILFLIAERLRNLGRYTFADVASYRLQQRPIRTLSACGSLVVVALYLIAQMVGAGKLIQLLFGLNYHVAVVLVGILMVLYVLFGGMLATTWVQIIKAVMLLSGATFMAIMVMKSVNFNFNTLFSEAVKVHPKGLSIMSPGGLVSDPISALSLGLALMFGTAGLPHILMRFFTVSDAKEARKSVFYATGFIGYFYILTFIIGFGAILLVGPNQTFKDAAGALLGGNNMAAVHLANAVGGSFFLGFISAVAFATILAVVAGLTLAGASAVSHDLYASVIKKGKANERDELRVSKITVIILGIVAIGLGILFEKQNIAFMVGLAFSIAASCNFPIIIISMYWDKLTTRGAMIGGWLGLSTAVILMILGPTIWVTILGHEKPIYPYEYPALFSMIAAFVGTWFFSITDNSETGKQERLLFKSQFVRSQTGLGASKGGAH</sequence>
<keyword id="KW-0997">Cell inner membrane</keyword>
<keyword id="KW-1003">Cell membrane</keyword>
<keyword id="KW-0406">Ion transport</keyword>
<keyword id="KW-0472">Membrane</keyword>
<keyword id="KW-0915">Sodium</keyword>
<keyword id="KW-0739">Sodium transport</keyword>
<keyword id="KW-0769">Symport</keyword>
<keyword id="KW-0812">Transmembrane</keyword>
<keyword id="KW-1133">Transmembrane helix</keyword>
<keyword id="KW-0813">Transport</keyword>
<protein>
    <recommendedName>
        <fullName evidence="1">Cation/acetate symporter ActP</fullName>
    </recommendedName>
    <alternativeName>
        <fullName evidence="1">Acetate permease</fullName>
    </alternativeName>
    <alternativeName>
        <fullName evidence="1">Acetate transporter ActP</fullName>
    </alternativeName>
</protein>
<reference key="1">
    <citation type="journal article" date="2004" name="Proc. Natl. Acad. Sci. U.S.A.">
        <title>Insights into the evolution of Yersinia pestis through whole-genome comparison with Yersinia pseudotuberculosis.</title>
        <authorList>
            <person name="Chain P.S.G."/>
            <person name="Carniel E."/>
            <person name="Larimer F.W."/>
            <person name="Lamerdin J."/>
            <person name="Stoutland P.O."/>
            <person name="Regala W.M."/>
            <person name="Georgescu A.M."/>
            <person name="Vergez L.M."/>
            <person name="Land M.L."/>
            <person name="Motin V.L."/>
            <person name="Brubaker R.R."/>
            <person name="Fowler J."/>
            <person name="Hinnebusch J."/>
            <person name="Marceau M."/>
            <person name="Medigue C."/>
            <person name="Simonet M."/>
            <person name="Chenal-Francisque V."/>
            <person name="Souza B."/>
            <person name="Dacheux D."/>
            <person name="Elliott J.M."/>
            <person name="Derbise A."/>
            <person name="Hauser L.J."/>
            <person name="Garcia E."/>
        </authorList>
    </citation>
    <scope>NUCLEOTIDE SEQUENCE [LARGE SCALE GENOMIC DNA]</scope>
    <source>
        <strain>IP32953</strain>
    </source>
</reference>
<evidence type="ECO:0000255" key="1">
    <source>
        <dbReference type="HAMAP-Rule" id="MF_01426"/>
    </source>
</evidence>
<name>ACTP_YERPS</name>